<organism>
    <name type="scientific">Arabidopsis thaliana</name>
    <name type="common">Mouse-ear cress</name>
    <dbReference type="NCBI Taxonomy" id="3702"/>
    <lineage>
        <taxon>Eukaryota</taxon>
        <taxon>Viridiplantae</taxon>
        <taxon>Streptophyta</taxon>
        <taxon>Embryophyta</taxon>
        <taxon>Tracheophyta</taxon>
        <taxon>Spermatophyta</taxon>
        <taxon>Magnoliopsida</taxon>
        <taxon>eudicotyledons</taxon>
        <taxon>Gunneridae</taxon>
        <taxon>Pentapetalae</taxon>
        <taxon>rosids</taxon>
        <taxon>malvids</taxon>
        <taxon>Brassicales</taxon>
        <taxon>Brassicaceae</taxon>
        <taxon>Camelineae</taxon>
        <taxon>Arabidopsis</taxon>
    </lineage>
</organism>
<protein>
    <recommendedName>
        <fullName>Protein NRT1/ PTR FAMILY 5.6</fullName>
        <shortName>AtNPF5.6</shortName>
    </recommendedName>
</protein>
<name>PTR28_ARATH</name>
<feature type="chain" id="PRO_0000399962" description="Protein NRT1/ PTR FAMILY 5.6">
    <location>
        <begin position="1"/>
        <end position="575"/>
    </location>
</feature>
<feature type="transmembrane region" description="Helical" evidence="3">
    <location>
        <begin position="44"/>
        <end position="64"/>
    </location>
</feature>
<feature type="transmembrane region" description="Helical" evidence="3">
    <location>
        <begin position="88"/>
        <end position="108"/>
    </location>
</feature>
<feature type="transmembrane region" description="Helical" evidence="3">
    <location>
        <begin position="113"/>
        <end position="133"/>
    </location>
</feature>
<feature type="transmembrane region" description="Helical" evidence="3">
    <location>
        <begin position="153"/>
        <end position="173"/>
    </location>
</feature>
<feature type="transmembrane region" description="Helical" evidence="3">
    <location>
        <begin position="195"/>
        <end position="215"/>
    </location>
</feature>
<feature type="transmembrane region" description="Helical" evidence="3">
    <location>
        <begin position="223"/>
        <end position="243"/>
    </location>
</feature>
<feature type="transmembrane region" description="Helical" evidence="3">
    <location>
        <begin position="339"/>
        <end position="359"/>
    </location>
</feature>
<feature type="transmembrane region" description="Helical" evidence="3">
    <location>
        <begin position="375"/>
        <end position="395"/>
    </location>
</feature>
<feature type="transmembrane region" description="Helical" evidence="3">
    <location>
        <begin position="420"/>
        <end position="440"/>
    </location>
</feature>
<feature type="transmembrane region" description="Helical" evidence="3">
    <location>
        <begin position="457"/>
        <end position="477"/>
    </location>
</feature>
<feature type="transmembrane region" description="Helical" evidence="3">
    <location>
        <begin position="493"/>
        <end position="513"/>
    </location>
</feature>
<feature type="transmembrane region" description="Helical" evidence="3">
    <location>
        <begin position="541"/>
        <end position="561"/>
    </location>
</feature>
<feature type="modified residue" description="Phosphothreonine" evidence="2">
    <location>
        <position position="112"/>
    </location>
</feature>
<gene>
    <name type="primary">NPF5.6</name>
    <name type="ordered locus">At2g37900</name>
    <name type="ORF">T8P21.19</name>
</gene>
<reference key="1">
    <citation type="journal article" date="1999" name="Nature">
        <title>Sequence and analysis of chromosome 2 of the plant Arabidopsis thaliana.</title>
        <authorList>
            <person name="Lin X."/>
            <person name="Kaul S."/>
            <person name="Rounsley S.D."/>
            <person name="Shea T.P."/>
            <person name="Benito M.-I."/>
            <person name="Town C.D."/>
            <person name="Fujii C.Y."/>
            <person name="Mason T.M."/>
            <person name="Bowman C.L."/>
            <person name="Barnstead M.E."/>
            <person name="Feldblyum T.V."/>
            <person name="Buell C.R."/>
            <person name="Ketchum K.A."/>
            <person name="Lee J.J."/>
            <person name="Ronning C.M."/>
            <person name="Koo H.L."/>
            <person name="Moffat K.S."/>
            <person name="Cronin L.A."/>
            <person name="Shen M."/>
            <person name="Pai G."/>
            <person name="Van Aken S."/>
            <person name="Umayam L."/>
            <person name="Tallon L.J."/>
            <person name="Gill J.E."/>
            <person name="Adams M.D."/>
            <person name="Carrera A.J."/>
            <person name="Creasy T.H."/>
            <person name="Goodman H.M."/>
            <person name="Somerville C.R."/>
            <person name="Copenhaver G.P."/>
            <person name="Preuss D."/>
            <person name="Nierman W.C."/>
            <person name="White O."/>
            <person name="Eisen J.A."/>
            <person name="Salzberg S.L."/>
            <person name="Fraser C.M."/>
            <person name="Venter J.C."/>
        </authorList>
    </citation>
    <scope>NUCLEOTIDE SEQUENCE [LARGE SCALE GENOMIC DNA]</scope>
    <source>
        <strain>cv. Columbia</strain>
    </source>
</reference>
<reference key="2">
    <citation type="journal article" date="2017" name="Plant J.">
        <title>Araport11: a complete reannotation of the Arabidopsis thaliana reference genome.</title>
        <authorList>
            <person name="Cheng C.Y."/>
            <person name="Krishnakumar V."/>
            <person name="Chan A.P."/>
            <person name="Thibaud-Nissen F."/>
            <person name="Schobel S."/>
            <person name="Town C.D."/>
        </authorList>
    </citation>
    <scope>GENOME REANNOTATION</scope>
    <source>
        <strain>cv. Columbia</strain>
    </source>
</reference>
<reference key="3">
    <citation type="journal article" date="2007" name="FEBS Lett.">
        <title>Nitrate transporters and peptide transporters.</title>
        <authorList>
            <person name="Tsay Y.F."/>
            <person name="Chiu C.C."/>
            <person name="Tsai C.B."/>
            <person name="Ho C.H."/>
            <person name="Hsu P.K."/>
        </authorList>
    </citation>
    <scope>TISSUE SPECIFICITY</scope>
    <scope>GENE FAMILY</scope>
</reference>
<reference key="4">
    <citation type="journal article" date="2010" name="Plant Cell">
        <title>The Arabidopsis nitrate transporter NRT1.8 functions in nitrate removal from the xylem sap and mediates cadmium tolerance.</title>
        <authorList>
            <person name="Li J.Y."/>
            <person name="Fu Y.L."/>
            <person name="Pike S.M."/>
            <person name="Bao J."/>
            <person name="Tian W."/>
            <person name="Zhang Y."/>
            <person name="Chen C.Z."/>
            <person name="Zhang Y."/>
            <person name="Li H.M."/>
            <person name="Huang J."/>
            <person name="Li L.G."/>
            <person name="Schroeder J.I."/>
            <person name="Gassmann W."/>
            <person name="Gong J.M."/>
        </authorList>
    </citation>
    <scope>GENE FAMILY</scope>
</reference>
<reference key="5">
    <citation type="journal article" date="2014" name="Trends Plant Sci.">
        <title>A unified nomenclature of NITRATE TRANSPORTER 1/PEPTIDE TRANSPORTER family members in plants.</title>
        <authorList>
            <person name="Leran S."/>
            <person name="Varala K."/>
            <person name="Boyer J.C."/>
            <person name="Chiurazzi M."/>
            <person name="Crawford N."/>
            <person name="Daniel-Vedele F."/>
            <person name="David L."/>
            <person name="Dickstein R."/>
            <person name="Fernandez E."/>
            <person name="Forde B."/>
            <person name="Gassmann W."/>
            <person name="Geiger D."/>
            <person name="Gojon A."/>
            <person name="Gong J.M."/>
            <person name="Halkier B.A."/>
            <person name="Harris J.M."/>
            <person name="Hedrich R."/>
            <person name="Limami A.M."/>
            <person name="Rentsch D."/>
            <person name="Seo M."/>
            <person name="Tsay Y.F."/>
            <person name="Zhang M."/>
            <person name="Coruzzi G."/>
            <person name="Lacombe B."/>
        </authorList>
    </citation>
    <scope>GENE FAMILY</scope>
    <scope>NOMENCLATURE</scope>
</reference>
<dbReference type="EMBL" id="CP002685">
    <property type="protein sequence ID" value="AEC09463.1"/>
    <property type="molecule type" value="Genomic_DNA"/>
</dbReference>
<dbReference type="PIR" id="E84798">
    <property type="entry name" value="E84798"/>
</dbReference>
<dbReference type="RefSeq" id="NP_181326.1">
    <property type="nucleotide sequence ID" value="NM_129346.2"/>
</dbReference>
<dbReference type="SMR" id="P0CI03"/>
<dbReference type="FunCoup" id="P0CI03">
    <property type="interactions" value="1657"/>
</dbReference>
<dbReference type="STRING" id="3702.P0CI03"/>
<dbReference type="PaxDb" id="3702-AT2G37900.1"/>
<dbReference type="ProteomicsDB" id="226244"/>
<dbReference type="EnsemblPlants" id="AT2G37900.1">
    <property type="protein sequence ID" value="AT2G37900.1"/>
    <property type="gene ID" value="AT2G37900"/>
</dbReference>
<dbReference type="GeneID" id="818366"/>
<dbReference type="Gramene" id="AT2G37900.1">
    <property type="protein sequence ID" value="AT2G37900.1"/>
    <property type="gene ID" value="AT2G37900"/>
</dbReference>
<dbReference type="KEGG" id="ath:AT2G37900"/>
<dbReference type="Araport" id="AT2G37900"/>
<dbReference type="TAIR" id="AT2G37900"/>
<dbReference type="eggNOG" id="KOG1237">
    <property type="taxonomic scope" value="Eukaryota"/>
</dbReference>
<dbReference type="HOGENOM" id="CLU_009313_4_1_1"/>
<dbReference type="InParanoid" id="P0CI03"/>
<dbReference type="OMA" id="ADVANCY"/>
<dbReference type="OrthoDB" id="8904098at2759"/>
<dbReference type="PRO" id="PR:P0CI03"/>
<dbReference type="Proteomes" id="UP000006548">
    <property type="component" value="Chromosome 2"/>
</dbReference>
<dbReference type="ExpressionAtlas" id="P0CI03">
    <property type="expression patterns" value="baseline and differential"/>
</dbReference>
<dbReference type="GO" id="GO:0016020">
    <property type="term" value="C:membrane"/>
    <property type="evidence" value="ECO:0007669"/>
    <property type="project" value="UniProtKB-SubCell"/>
</dbReference>
<dbReference type="GO" id="GO:0071916">
    <property type="term" value="F:dipeptide transmembrane transporter activity"/>
    <property type="evidence" value="ECO:0007669"/>
    <property type="project" value="InterPro"/>
</dbReference>
<dbReference type="GO" id="GO:0042937">
    <property type="term" value="F:tripeptide transmembrane transporter activity"/>
    <property type="evidence" value="ECO:0007669"/>
    <property type="project" value="InterPro"/>
</dbReference>
<dbReference type="CDD" id="cd17417">
    <property type="entry name" value="MFS_NPF5"/>
    <property type="match status" value="1"/>
</dbReference>
<dbReference type="Gene3D" id="1.20.1250.20">
    <property type="entry name" value="MFS general substrate transporter like domains"/>
    <property type="match status" value="1"/>
</dbReference>
<dbReference type="InterPro" id="IPR036259">
    <property type="entry name" value="MFS_trans_sf"/>
</dbReference>
<dbReference type="InterPro" id="IPR044739">
    <property type="entry name" value="NRT1/PTR"/>
</dbReference>
<dbReference type="InterPro" id="IPR000109">
    <property type="entry name" value="POT_fam"/>
</dbReference>
<dbReference type="InterPro" id="IPR018456">
    <property type="entry name" value="PTR2_symporter_CS"/>
</dbReference>
<dbReference type="PANTHER" id="PTHR11654">
    <property type="entry name" value="OLIGOPEPTIDE TRANSPORTER-RELATED"/>
    <property type="match status" value="1"/>
</dbReference>
<dbReference type="Pfam" id="PF00854">
    <property type="entry name" value="PTR2"/>
    <property type="match status" value="1"/>
</dbReference>
<dbReference type="SUPFAM" id="SSF103473">
    <property type="entry name" value="MFS general substrate transporter"/>
    <property type="match status" value="1"/>
</dbReference>
<dbReference type="PROSITE" id="PS01022">
    <property type="entry name" value="PTR2_1"/>
    <property type="match status" value="1"/>
</dbReference>
<evidence type="ECO:0000250" key="1"/>
<evidence type="ECO:0000250" key="2">
    <source>
        <dbReference type="UniProtKB" id="Q05085"/>
    </source>
</evidence>
<evidence type="ECO:0000255" key="3"/>
<evidence type="ECO:0000269" key="4">
    <source>
    </source>
</evidence>
<evidence type="ECO:0000305" key="5"/>
<comment type="subcellular location">
    <subcellularLocation>
        <location evidence="1">Membrane</location>
        <topology evidence="1">Multi-pass membrane protein</topology>
    </subcellularLocation>
</comment>
<comment type="tissue specificity">
    <text evidence="4">Expressed in stems, shoots, leaves, flowers and siliques.</text>
</comment>
<comment type="similarity">
    <text evidence="5">Belongs to the major facilitator superfamily. Proton-dependent oligopeptide transporter (POT/PTR) (TC 2.A.17) family.</text>
</comment>
<keyword id="KW-0472">Membrane</keyword>
<keyword id="KW-0597">Phosphoprotein</keyword>
<keyword id="KW-1185">Reference proteome</keyword>
<keyword id="KW-0812">Transmembrane</keyword>
<keyword id="KW-1133">Transmembrane helix</keyword>
<keyword id="KW-0813">Transport</keyword>
<proteinExistence type="evidence at transcript level"/>
<sequence>MEHKNIGAEVLQDTYDDQQKWVLDSSLDSRGRVPLRARTGAWRAALFIIAIEFSERLSYFGLATNLVVYLTTILNQDLKMAIRNVNYWSGVTTLMPLLGGFIADAYLGRYATVLVATTIYLMGLVLLTMSWFIPGLKPCHQEVCVEPRKAHEVAFFIAIYLISIGTGGHKPSLESFGADQFDDDHVEERKMKMSFFNWWNVSLCAGILTAVTAVAYIEDRVGWGVAGIILTVVMAISLIIFFIGKPFYRYRTPSGSPLTPILQVFVAAIAKRNLPYPSDPSLLHEVSKTEFTSGRLLCHTEHLKFLDKAAIIEDKNPLALEKQSPWRLLTLTKVEETKLIINVIPIWFSTLAFGICATQASTFFIKQAITMDRHIGGFTVPPASMFTLTALTLIISLTVYEKLLVPLLRSITRNQRGINILQRIGTGMIFSLITMIIAALVEKQRLDRTNNNKPMSVIWLAPQFMVIGFADAFTLVGLQEYFYHQVPDSMRSLGIAFYLSVIGAASFLNNLLITAVDTLAENFSGKSWFGKDLNSSRLDRFYWFLAGVIAANICVFVIVAKRCPYKSVQPSQGLS</sequence>
<accession>P0CI03</accession>